<feature type="peptide" id="PRO_0000233921" description="Brevinin-2Ec" evidence="4">
    <location>
        <begin position="1"/>
        <end position="34"/>
    </location>
</feature>
<feature type="disulfide bond" evidence="2">
    <location>
        <begin position="28"/>
        <end position="34"/>
    </location>
</feature>
<protein>
    <recommendedName>
        <fullName>Brevinin-2Ec</fullName>
    </recommendedName>
</protein>
<evidence type="ECO:0000250" key="1"/>
<evidence type="ECO:0000250" key="2">
    <source>
        <dbReference type="UniProtKB" id="P40839"/>
    </source>
</evidence>
<evidence type="ECO:0000255" key="3"/>
<evidence type="ECO:0000269" key="4">
    <source>
    </source>
</evidence>
<evidence type="ECO:0000305" key="5"/>
<sequence>GILLDKLKNFAKTAGKGVLQSLLNTASCKLSGQC</sequence>
<organism>
    <name type="scientific">Pelophylax saharicus</name>
    <name type="common">Sahara frog</name>
    <name type="synonym">Rana saharica</name>
    <dbReference type="NCBI Taxonomy" id="70019"/>
    <lineage>
        <taxon>Eukaryota</taxon>
        <taxon>Metazoa</taxon>
        <taxon>Chordata</taxon>
        <taxon>Craniata</taxon>
        <taxon>Vertebrata</taxon>
        <taxon>Euteleostomi</taxon>
        <taxon>Amphibia</taxon>
        <taxon>Batrachia</taxon>
        <taxon>Anura</taxon>
        <taxon>Neobatrachia</taxon>
        <taxon>Ranoidea</taxon>
        <taxon>Ranidae</taxon>
        <taxon>Pelophylax</taxon>
    </lineage>
</organism>
<reference evidence="5" key="1">
    <citation type="journal article" date="2006" name="J. Endocrinol.">
        <title>Skin secretions of Rana saharica frogs reveal antimicrobial peptides esculentins-1 and -1B and brevinins-1E and -2EC with novel insulin releasing activity.</title>
        <authorList>
            <person name="Marenah L."/>
            <person name="Flatt P.R."/>
            <person name="Orr D.F."/>
            <person name="Shaw C."/>
            <person name="Abdel-Wahab Y.H.A."/>
        </authorList>
    </citation>
    <scope>PROTEIN SEQUENCE</scope>
    <scope>FUNCTION</scope>
    <scope>SUBCELLULAR LOCATION</scope>
    <scope>TISSUE SPECIFICITY</scope>
    <scope>MASS SPECTROMETRY</scope>
    <source>
        <tissue evidence="4">Skin secretion</tissue>
    </source>
</reference>
<comment type="function">
    <text evidence="1 4">Antimicrobial peptide (By similarity). Stimulates insulin release by BRIN-BD11 cells in vitro.</text>
</comment>
<comment type="subcellular location">
    <subcellularLocation>
        <location evidence="4">Secreted</location>
    </subcellularLocation>
</comment>
<comment type="tissue specificity">
    <text evidence="4">Expressed by the skin glands.</text>
</comment>
<comment type="mass spectrometry"/>
<comment type="similarity">
    <text evidence="3">Belongs to the frog skin active peptide (FSAP) family. Brevinin subfamily.</text>
</comment>
<keyword id="KW-0878">Amphibian defense peptide</keyword>
<keyword id="KW-0044">Antibiotic</keyword>
<keyword id="KW-0929">Antimicrobial</keyword>
<keyword id="KW-0903">Direct protein sequencing</keyword>
<keyword id="KW-1015">Disulfide bond</keyword>
<keyword id="KW-0964">Secreted</keyword>
<proteinExistence type="evidence at protein level"/>
<dbReference type="SMR" id="P84842"/>
<dbReference type="GO" id="GO:0005576">
    <property type="term" value="C:extracellular region"/>
    <property type="evidence" value="ECO:0000314"/>
    <property type="project" value="UniProtKB"/>
</dbReference>
<dbReference type="GO" id="GO:0042742">
    <property type="term" value="P:defense response to bacterium"/>
    <property type="evidence" value="ECO:0007669"/>
    <property type="project" value="UniProtKB-KW"/>
</dbReference>
<dbReference type="GO" id="GO:0032024">
    <property type="term" value="P:positive regulation of insulin secretion"/>
    <property type="evidence" value="ECO:0000314"/>
    <property type="project" value="UniProtKB"/>
</dbReference>
<dbReference type="InterPro" id="IPR012521">
    <property type="entry name" value="Antimicrobial_frog_2"/>
</dbReference>
<dbReference type="Pfam" id="PF08023">
    <property type="entry name" value="Antimicrobial_2"/>
    <property type="match status" value="1"/>
</dbReference>
<accession>P84842</accession>
<name>BR2C_PELSA</name>